<reference key="1">
    <citation type="submission" date="2006-10" db="EMBL/GenBank/DDBJ databases">
        <authorList>
            <person name="Fleischmann R.D."/>
            <person name="Dodson R.J."/>
            <person name="Haft D.H."/>
            <person name="Merkel J.S."/>
            <person name="Nelson W.C."/>
            <person name="Fraser C.M."/>
        </authorList>
    </citation>
    <scope>NUCLEOTIDE SEQUENCE [LARGE SCALE GENOMIC DNA]</scope>
    <source>
        <strain>ATCC 700084 / mc(2)155</strain>
    </source>
</reference>
<reference key="2">
    <citation type="journal article" date="2007" name="Genome Biol.">
        <title>Interrupted coding sequences in Mycobacterium smegmatis: authentic mutations or sequencing errors?</title>
        <authorList>
            <person name="Deshayes C."/>
            <person name="Perrodou E."/>
            <person name="Gallien S."/>
            <person name="Euphrasie D."/>
            <person name="Schaeffer C."/>
            <person name="Van-Dorsselaer A."/>
            <person name="Poch O."/>
            <person name="Lecompte O."/>
            <person name="Reyrat J.-M."/>
        </authorList>
    </citation>
    <scope>NUCLEOTIDE SEQUENCE [LARGE SCALE GENOMIC DNA]</scope>
    <source>
        <strain>ATCC 700084 / mc(2)155</strain>
    </source>
</reference>
<reference key="3">
    <citation type="journal article" date="2009" name="Genome Res.">
        <title>Ortho-proteogenomics: multiple proteomes investigation through orthology and a new MS-based protocol.</title>
        <authorList>
            <person name="Gallien S."/>
            <person name="Perrodou E."/>
            <person name="Carapito C."/>
            <person name="Deshayes C."/>
            <person name="Reyrat J.-M."/>
            <person name="Van Dorsselaer A."/>
            <person name="Poch O."/>
            <person name="Schaeffer C."/>
            <person name="Lecompte O."/>
        </authorList>
    </citation>
    <scope>NUCLEOTIDE SEQUENCE [LARGE SCALE GENOMIC DNA]</scope>
    <scope>IDENTIFICATION BY MASS SPECTROMETRY [LARGE SCALE ANALYSIS]</scope>
    <source>
        <strain>ATCC 700084 / mc(2)155</strain>
    </source>
</reference>
<reference key="4">
    <citation type="journal article" date="2005" name="Nat. Struct. Mol. Biol.">
        <title>Mechanism of nonhomologous end-joining in mycobacteria: a low-fidelity repair system driven by Ku, ligase D and ligase C.</title>
        <authorList>
            <person name="Gong C."/>
            <person name="Bongiorno P."/>
            <person name="Martins A."/>
            <person name="Stephanou N.C."/>
            <person name="Zhu H."/>
            <person name="Shuman S."/>
            <person name="Glickman M.S."/>
        </authorList>
    </citation>
    <scope>DISRUPTION PHENOTYPE</scope>
    <source>
        <strain>ATCC 700084 / mc(2)155</strain>
    </source>
</reference>
<reference key="5">
    <citation type="journal article" date="2008" name="Genes Dev.">
        <title>The pathways and outcomes of mycobacterial NHEJ depend on the structure of the broken DNA ends.</title>
        <authorList>
            <person name="Aniukwu J."/>
            <person name="Glickman M.S."/>
            <person name="Shuman S."/>
        </authorList>
    </citation>
    <scope>FUNCTION</scope>
    <scope>DISRUPTION PHENOTYPE</scope>
    <source>
        <strain>ATCC 700084 / mc(2)155</strain>
    </source>
</reference>
<feature type="chain" id="PRO_0000313312" description="DNA ligase A">
    <location>
        <begin position="1"/>
        <end position="701"/>
    </location>
</feature>
<feature type="domain" description="BRCT" evidence="1">
    <location>
        <begin position="615"/>
        <end position="701"/>
    </location>
</feature>
<feature type="region of interest" description="Disordered" evidence="2">
    <location>
        <begin position="1"/>
        <end position="23"/>
    </location>
</feature>
<feature type="active site" description="N6-AMP-lysine intermediate" evidence="1">
    <location>
        <position position="131"/>
    </location>
</feature>
<feature type="binding site" evidence="1">
    <location>
        <begin position="49"/>
        <end position="53"/>
    </location>
    <ligand>
        <name>NAD(+)</name>
        <dbReference type="ChEBI" id="CHEBI:57540"/>
    </ligand>
</feature>
<feature type="binding site" evidence="1">
    <location>
        <begin position="99"/>
        <end position="100"/>
    </location>
    <ligand>
        <name>NAD(+)</name>
        <dbReference type="ChEBI" id="CHEBI:57540"/>
    </ligand>
</feature>
<feature type="binding site" evidence="1">
    <location>
        <position position="129"/>
    </location>
    <ligand>
        <name>NAD(+)</name>
        <dbReference type="ChEBI" id="CHEBI:57540"/>
    </ligand>
</feature>
<feature type="binding site" evidence="1">
    <location>
        <position position="152"/>
    </location>
    <ligand>
        <name>NAD(+)</name>
        <dbReference type="ChEBI" id="CHEBI:57540"/>
    </ligand>
</feature>
<feature type="binding site" evidence="1">
    <location>
        <position position="192"/>
    </location>
    <ligand>
        <name>NAD(+)</name>
        <dbReference type="ChEBI" id="CHEBI:57540"/>
    </ligand>
</feature>
<feature type="binding site" evidence="1">
    <location>
        <position position="308"/>
    </location>
    <ligand>
        <name>NAD(+)</name>
        <dbReference type="ChEBI" id="CHEBI:57540"/>
    </ligand>
</feature>
<feature type="binding site" evidence="1">
    <location>
        <position position="332"/>
    </location>
    <ligand>
        <name>NAD(+)</name>
        <dbReference type="ChEBI" id="CHEBI:57540"/>
    </ligand>
</feature>
<feature type="binding site" evidence="1">
    <location>
        <position position="426"/>
    </location>
    <ligand>
        <name>Zn(2+)</name>
        <dbReference type="ChEBI" id="CHEBI:29105"/>
    </ligand>
</feature>
<feature type="binding site" evidence="1">
    <location>
        <position position="429"/>
    </location>
    <ligand>
        <name>Zn(2+)</name>
        <dbReference type="ChEBI" id="CHEBI:29105"/>
    </ligand>
</feature>
<feature type="binding site" evidence="1">
    <location>
        <position position="445"/>
    </location>
    <ligand>
        <name>Zn(2+)</name>
        <dbReference type="ChEBI" id="CHEBI:29105"/>
    </ligand>
</feature>
<feature type="binding site" evidence="1">
    <location>
        <position position="451"/>
    </location>
    <ligand>
        <name>Zn(2+)</name>
        <dbReference type="ChEBI" id="CHEBI:29105"/>
    </ligand>
</feature>
<evidence type="ECO:0000255" key="1">
    <source>
        <dbReference type="HAMAP-Rule" id="MF_01588"/>
    </source>
</evidence>
<evidence type="ECO:0000256" key="2">
    <source>
        <dbReference type="SAM" id="MobiDB-lite"/>
    </source>
</evidence>
<evidence type="ECO:0000269" key="3">
    <source>
    </source>
</evidence>
<evidence type="ECO:0000269" key="4">
    <source>
    </source>
</evidence>
<evidence type="ECO:0000305" key="5"/>
<organism>
    <name type="scientific">Mycolicibacterium smegmatis (strain ATCC 700084 / mc(2)155)</name>
    <name type="common">Mycobacterium smegmatis</name>
    <dbReference type="NCBI Taxonomy" id="246196"/>
    <lineage>
        <taxon>Bacteria</taxon>
        <taxon>Bacillati</taxon>
        <taxon>Actinomycetota</taxon>
        <taxon>Actinomycetes</taxon>
        <taxon>Mycobacteriales</taxon>
        <taxon>Mycobacteriaceae</taxon>
        <taxon>Mycolicibacterium</taxon>
    </lineage>
</organism>
<sequence length="701" mass="76269">MSEKATGEVEAELPEHPDADERRRWQELADEVREHQFRYYVKDAPIISDAEFDKLLRELQALEDAHPELRTPDSPTQLVGGAGFATEFAPAEHLERMLSLDNVFDSDELTAWAARISSETGDAAHFLCELKIDGVALSLVYRDGRLERGATRGDGRTGEDVTLNARTIDDIPERLTPSDEFPVPAVLEVRGEVFFRVADFEELNAGLVAEGKPPFANPRNSAAGSLRQKNPAVTARRKLRMICHGIGYTEGFTPASLHDAYRALGAWGLPVSEHTTKVSTVAEVAERIAYWGEHRHDVEHEIDGVVVKVDEVALQRRLGATSRAPRWAVAYKYPPEEATTKLLDIRVNVGRTGRVTPFAYMEPVKVAGSTVGLATLHNASEVKRKGVLIGDTVVIRKAGDVIPEVLGPVVDLRDGTEREFEFPTHCPECGTELAPAKEGDADIRCPNSRSCPAQLRERLFHLAGRGAFDIEGLGYEAATALLAAQVIPDEGDLFTLTADDLLRTELFTTKKGELSANGKRLLANLTKAKEQPLWRVLVALSIRHVGPTAARALATEFGSLEAIEAASEEELAAVEGVGPTIAAAVKDWFTVDWHRAIVDKWRAAGVRMADERDASIERTLEGLSIVVTGSLAGFSRDQAKEAIIARGGKAAGSVSKKTAYVVAGDAPGSKYDKAVELGVPVLDEDGFRRLLEQGPPVEPAE</sequence>
<gene>
    <name evidence="1" type="primary">ligA</name>
    <name type="ordered locus">MSMEG_2362</name>
    <name type="ordered locus">MSMEI_2302</name>
</gene>
<name>DNLJ_MYCS2</name>
<accession>A0QUW7</accession>
<accession>I7FZU4</accession>
<dbReference type="EC" id="6.5.1.2" evidence="1"/>
<dbReference type="EMBL" id="CP000480">
    <property type="protein sequence ID" value="ABK72497.1"/>
    <property type="molecule type" value="Genomic_DNA"/>
</dbReference>
<dbReference type="EMBL" id="CP001663">
    <property type="protein sequence ID" value="AFP38772.1"/>
    <property type="molecule type" value="Genomic_DNA"/>
</dbReference>
<dbReference type="RefSeq" id="WP_011728295.1">
    <property type="nucleotide sequence ID" value="NZ_SIJM01000012.1"/>
</dbReference>
<dbReference type="RefSeq" id="YP_886705.1">
    <property type="nucleotide sequence ID" value="NC_008596.1"/>
</dbReference>
<dbReference type="SMR" id="A0QUW7"/>
<dbReference type="STRING" id="246196.MSMEG_2362"/>
<dbReference type="PaxDb" id="246196-MSMEI_2302"/>
<dbReference type="GeneID" id="93457153"/>
<dbReference type="KEGG" id="msb:LJ00_11745"/>
<dbReference type="KEGG" id="msg:MSMEI_2302"/>
<dbReference type="KEGG" id="msm:MSMEG_2362"/>
<dbReference type="PATRIC" id="fig|246196.19.peg.2328"/>
<dbReference type="eggNOG" id="COG0272">
    <property type="taxonomic scope" value="Bacteria"/>
</dbReference>
<dbReference type="OrthoDB" id="9759736at2"/>
<dbReference type="Proteomes" id="UP000000757">
    <property type="component" value="Chromosome"/>
</dbReference>
<dbReference type="Proteomes" id="UP000006158">
    <property type="component" value="Chromosome"/>
</dbReference>
<dbReference type="GO" id="GO:0005829">
    <property type="term" value="C:cytosol"/>
    <property type="evidence" value="ECO:0007669"/>
    <property type="project" value="TreeGrafter"/>
</dbReference>
<dbReference type="GO" id="GO:0003911">
    <property type="term" value="F:DNA ligase (NAD+) activity"/>
    <property type="evidence" value="ECO:0007669"/>
    <property type="project" value="UniProtKB-UniRule"/>
</dbReference>
<dbReference type="GO" id="GO:0046872">
    <property type="term" value="F:metal ion binding"/>
    <property type="evidence" value="ECO:0007669"/>
    <property type="project" value="UniProtKB-KW"/>
</dbReference>
<dbReference type="GO" id="GO:0006281">
    <property type="term" value="P:DNA repair"/>
    <property type="evidence" value="ECO:0007669"/>
    <property type="project" value="UniProtKB-KW"/>
</dbReference>
<dbReference type="GO" id="GO:0006260">
    <property type="term" value="P:DNA replication"/>
    <property type="evidence" value="ECO:0007669"/>
    <property type="project" value="UniProtKB-KW"/>
</dbReference>
<dbReference type="CDD" id="cd17748">
    <property type="entry name" value="BRCT_DNA_ligase_like"/>
    <property type="match status" value="1"/>
</dbReference>
<dbReference type="CDD" id="cd00114">
    <property type="entry name" value="LIGANc"/>
    <property type="match status" value="1"/>
</dbReference>
<dbReference type="FunFam" id="1.10.150.20:FF:000006">
    <property type="entry name" value="DNA ligase"/>
    <property type="match status" value="1"/>
</dbReference>
<dbReference type="FunFam" id="1.10.287.610:FF:000002">
    <property type="entry name" value="DNA ligase"/>
    <property type="match status" value="1"/>
</dbReference>
<dbReference type="FunFam" id="2.40.50.140:FF:000012">
    <property type="entry name" value="DNA ligase"/>
    <property type="match status" value="1"/>
</dbReference>
<dbReference type="FunFam" id="3.30.470.30:FF:000001">
    <property type="entry name" value="DNA ligase"/>
    <property type="match status" value="1"/>
</dbReference>
<dbReference type="FunFam" id="3.40.50.10190:FF:000054">
    <property type="entry name" value="DNA ligase"/>
    <property type="match status" value="1"/>
</dbReference>
<dbReference type="Gene3D" id="6.20.10.30">
    <property type="match status" value="1"/>
</dbReference>
<dbReference type="Gene3D" id="1.10.150.20">
    <property type="entry name" value="5' to 3' exonuclease, C-terminal subdomain"/>
    <property type="match status" value="2"/>
</dbReference>
<dbReference type="Gene3D" id="3.40.50.10190">
    <property type="entry name" value="BRCT domain"/>
    <property type="match status" value="1"/>
</dbReference>
<dbReference type="Gene3D" id="3.30.470.30">
    <property type="entry name" value="DNA ligase/mRNA capping enzyme"/>
    <property type="match status" value="1"/>
</dbReference>
<dbReference type="Gene3D" id="1.10.287.610">
    <property type="entry name" value="Helix hairpin bin"/>
    <property type="match status" value="1"/>
</dbReference>
<dbReference type="Gene3D" id="2.40.50.140">
    <property type="entry name" value="Nucleic acid-binding proteins"/>
    <property type="match status" value="1"/>
</dbReference>
<dbReference type="HAMAP" id="MF_01588">
    <property type="entry name" value="DNA_ligase_A"/>
    <property type="match status" value="1"/>
</dbReference>
<dbReference type="InterPro" id="IPR001357">
    <property type="entry name" value="BRCT_dom"/>
</dbReference>
<dbReference type="InterPro" id="IPR036420">
    <property type="entry name" value="BRCT_dom_sf"/>
</dbReference>
<dbReference type="InterPro" id="IPR041663">
    <property type="entry name" value="DisA/LigA_HHH"/>
</dbReference>
<dbReference type="InterPro" id="IPR001679">
    <property type="entry name" value="DNA_ligase"/>
</dbReference>
<dbReference type="InterPro" id="IPR018239">
    <property type="entry name" value="DNA_ligase_AS"/>
</dbReference>
<dbReference type="InterPro" id="IPR033136">
    <property type="entry name" value="DNA_ligase_CS"/>
</dbReference>
<dbReference type="InterPro" id="IPR013839">
    <property type="entry name" value="DNAligase_adenylation"/>
</dbReference>
<dbReference type="InterPro" id="IPR013840">
    <property type="entry name" value="DNAligase_N"/>
</dbReference>
<dbReference type="InterPro" id="IPR012340">
    <property type="entry name" value="NA-bd_OB-fold"/>
</dbReference>
<dbReference type="InterPro" id="IPR004150">
    <property type="entry name" value="NAD_DNA_ligase_OB"/>
</dbReference>
<dbReference type="InterPro" id="IPR010994">
    <property type="entry name" value="RuvA_2-like"/>
</dbReference>
<dbReference type="InterPro" id="IPR004149">
    <property type="entry name" value="Znf_DNAligase_C4"/>
</dbReference>
<dbReference type="NCBIfam" id="TIGR00575">
    <property type="entry name" value="dnlj"/>
    <property type="match status" value="1"/>
</dbReference>
<dbReference type="NCBIfam" id="NF005932">
    <property type="entry name" value="PRK07956.1"/>
    <property type="match status" value="1"/>
</dbReference>
<dbReference type="PANTHER" id="PTHR23389">
    <property type="entry name" value="CHROMOSOME TRANSMISSION FIDELITY FACTOR 18"/>
    <property type="match status" value="1"/>
</dbReference>
<dbReference type="PANTHER" id="PTHR23389:SF9">
    <property type="entry name" value="DNA LIGASE"/>
    <property type="match status" value="1"/>
</dbReference>
<dbReference type="Pfam" id="PF00533">
    <property type="entry name" value="BRCT"/>
    <property type="match status" value="1"/>
</dbReference>
<dbReference type="Pfam" id="PF01653">
    <property type="entry name" value="DNA_ligase_aden"/>
    <property type="match status" value="1"/>
</dbReference>
<dbReference type="Pfam" id="PF03120">
    <property type="entry name" value="DNA_ligase_OB"/>
    <property type="match status" value="1"/>
</dbReference>
<dbReference type="Pfam" id="PF03119">
    <property type="entry name" value="DNA_ligase_ZBD"/>
    <property type="match status" value="1"/>
</dbReference>
<dbReference type="Pfam" id="PF12826">
    <property type="entry name" value="HHH_2"/>
    <property type="match status" value="1"/>
</dbReference>
<dbReference type="Pfam" id="PF22745">
    <property type="entry name" value="Nlig-Ia"/>
    <property type="match status" value="1"/>
</dbReference>
<dbReference type="PIRSF" id="PIRSF001604">
    <property type="entry name" value="LigA"/>
    <property type="match status" value="1"/>
</dbReference>
<dbReference type="SMART" id="SM00292">
    <property type="entry name" value="BRCT"/>
    <property type="match status" value="1"/>
</dbReference>
<dbReference type="SMART" id="SM00532">
    <property type="entry name" value="LIGANc"/>
    <property type="match status" value="1"/>
</dbReference>
<dbReference type="SUPFAM" id="SSF52113">
    <property type="entry name" value="BRCT domain"/>
    <property type="match status" value="1"/>
</dbReference>
<dbReference type="SUPFAM" id="SSF56091">
    <property type="entry name" value="DNA ligase/mRNA capping enzyme, catalytic domain"/>
    <property type="match status" value="1"/>
</dbReference>
<dbReference type="SUPFAM" id="SSF50249">
    <property type="entry name" value="Nucleic acid-binding proteins"/>
    <property type="match status" value="1"/>
</dbReference>
<dbReference type="SUPFAM" id="SSF47781">
    <property type="entry name" value="RuvA domain 2-like"/>
    <property type="match status" value="1"/>
</dbReference>
<dbReference type="PROSITE" id="PS50172">
    <property type="entry name" value="BRCT"/>
    <property type="match status" value="1"/>
</dbReference>
<dbReference type="PROSITE" id="PS01055">
    <property type="entry name" value="DNA_LIGASE_N1"/>
    <property type="match status" value="1"/>
</dbReference>
<dbReference type="PROSITE" id="PS01056">
    <property type="entry name" value="DNA_LIGASE_N2"/>
    <property type="match status" value="1"/>
</dbReference>
<protein>
    <recommendedName>
        <fullName evidence="1">DNA ligase A</fullName>
        <ecNumber evidence="1">6.5.1.2</ecNumber>
    </recommendedName>
    <alternativeName>
        <fullName evidence="1">Polydeoxyribonucleotide synthase [NAD(+)]</fullName>
    </alternativeName>
</protein>
<proteinExistence type="evidence at protein level"/>
<comment type="function">
    <text evidence="1 4 5">DNA ligase that catalyzes the formation of phosphodiester linkages between 5'-phosphoryl and 3'-hydroxyl groups in double-stranded DNA using NAD as a coenzyme and as the energy source for the reaction. It is essential for DNA replication and repair of damaged DNA (Probable). Probably the only ligase required for non-homologous end joining (NHEJ) repair of 3-overhangs.</text>
</comment>
<comment type="catalytic activity">
    <reaction evidence="1">
        <text>NAD(+) + (deoxyribonucleotide)n-3'-hydroxyl + 5'-phospho-(deoxyribonucleotide)m = (deoxyribonucleotide)n+m + AMP + beta-nicotinamide D-nucleotide.</text>
        <dbReference type="EC" id="6.5.1.2"/>
    </reaction>
</comment>
<comment type="cofactor">
    <cofactor evidence="1">
        <name>Mg(2+)</name>
        <dbReference type="ChEBI" id="CHEBI:18420"/>
    </cofactor>
    <cofactor evidence="1">
        <name>Mn(2+)</name>
        <dbReference type="ChEBI" id="CHEBI:29035"/>
    </cofactor>
</comment>
<comment type="disruption phenotype">
    <text evidence="3 4">Essential, it cannot be disrupted.</text>
</comment>
<comment type="similarity">
    <text evidence="1">Belongs to the NAD-dependent DNA ligase family. LigA subfamily.</text>
</comment>
<keyword id="KW-0227">DNA damage</keyword>
<keyword id="KW-0234">DNA repair</keyword>
<keyword id="KW-0235">DNA replication</keyword>
<keyword id="KW-0436">Ligase</keyword>
<keyword id="KW-0460">Magnesium</keyword>
<keyword id="KW-0464">Manganese</keyword>
<keyword id="KW-0479">Metal-binding</keyword>
<keyword id="KW-0520">NAD</keyword>
<keyword id="KW-1185">Reference proteome</keyword>
<keyword id="KW-0862">Zinc</keyword>